<gene>
    <name type="ordered locus">PMI1371</name>
</gene>
<keyword id="KW-0997">Cell inner membrane</keyword>
<keyword id="KW-1003">Cell membrane</keyword>
<keyword id="KW-0472">Membrane</keyword>
<keyword id="KW-1185">Reference proteome</keyword>
<keyword id="KW-0812">Transmembrane</keyword>
<keyword id="KW-1133">Transmembrane helix</keyword>
<evidence type="ECO:0000255" key="1">
    <source>
        <dbReference type="HAMAP-Rule" id="MF_01085"/>
    </source>
</evidence>
<proteinExistence type="inferred from homology"/>
<organism>
    <name type="scientific">Proteus mirabilis (strain HI4320)</name>
    <dbReference type="NCBI Taxonomy" id="529507"/>
    <lineage>
        <taxon>Bacteria</taxon>
        <taxon>Pseudomonadati</taxon>
        <taxon>Pseudomonadota</taxon>
        <taxon>Gammaproteobacteria</taxon>
        <taxon>Enterobacterales</taxon>
        <taxon>Morganellaceae</taxon>
        <taxon>Proteus</taxon>
    </lineage>
</organism>
<name>Y1371_PROMH</name>
<sequence length="348" mass="39282">MNEPLKSRIDFKQSTLQNEEISLKKGLDFNQDEQFVPYNPQLEAQENEGRLEGEIQSALKPRKSLWKRLITVASTILGVSVIAQAGQWIYQSWINSDWIALGAASAGGLIVIAGMGSVITEWRRIYRLRQRADERDKARELLYSHAIGNGRPFCEDLAKQAGINSQHPAYIRWQSTLHDTHNDREILELYSQLVQPILDKQARAEISRSAAESTLMIAVSPLAMVDMAFIGWRNIRLINRIAQIYGIELGYYSRLKLFRLVLVNIAFAGATELVREVGMDWLSQDLAARLSTRAAQGIGAGLLTARLGIKAMELCRPLPWIDNKPKLSDFRKELIGQLKNTLGNKKKE</sequence>
<protein>
    <recommendedName>
        <fullName evidence="1">UPF0283 membrane protein PMI1371</fullName>
    </recommendedName>
</protein>
<accession>B4EWK1</accession>
<reference key="1">
    <citation type="journal article" date="2008" name="J. Bacteriol.">
        <title>Complete genome sequence of uropathogenic Proteus mirabilis, a master of both adherence and motility.</title>
        <authorList>
            <person name="Pearson M.M."/>
            <person name="Sebaihia M."/>
            <person name="Churcher C."/>
            <person name="Quail M.A."/>
            <person name="Seshasayee A.S."/>
            <person name="Luscombe N.M."/>
            <person name="Abdellah Z."/>
            <person name="Arrosmith C."/>
            <person name="Atkin B."/>
            <person name="Chillingworth T."/>
            <person name="Hauser H."/>
            <person name="Jagels K."/>
            <person name="Moule S."/>
            <person name="Mungall K."/>
            <person name="Norbertczak H."/>
            <person name="Rabbinowitsch E."/>
            <person name="Walker D."/>
            <person name="Whithead S."/>
            <person name="Thomson N.R."/>
            <person name="Rather P.N."/>
            <person name="Parkhill J."/>
            <person name="Mobley H.L.T."/>
        </authorList>
    </citation>
    <scope>NUCLEOTIDE SEQUENCE [LARGE SCALE GENOMIC DNA]</scope>
    <source>
        <strain>HI4320</strain>
    </source>
</reference>
<feature type="chain" id="PRO_1000136892" description="UPF0283 membrane protein PMI1371">
    <location>
        <begin position="1"/>
        <end position="348"/>
    </location>
</feature>
<feature type="transmembrane region" description="Helical" evidence="1">
    <location>
        <begin position="69"/>
        <end position="89"/>
    </location>
</feature>
<feature type="transmembrane region" description="Helical" evidence="1">
    <location>
        <begin position="99"/>
        <end position="119"/>
    </location>
</feature>
<dbReference type="EMBL" id="AM942759">
    <property type="protein sequence ID" value="CAR42901.1"/>
    <property type="molecule type" value="Genomic_DNA"/>
</dbReference>
<dbReference type="RefSeq" id="WP_004243095.1">
    <property type="nucleotide sequence ID" value="NC_010554.1"/>
</dbReference>
<dbReference type="EnsemblBacteria" id="CAR42901">
    <property type="protein sequence ID" value="CAR42901"/>
    <property type="gene ID" value="PMI1371"/>
</dbReference>
<dbReference type="GeneID" id="6803066"/>
<dbReference type="KEGG" id="pmr:PMI1371"/>
<dbReference type="eggNOG" id="COG3768">
    <property type="taxonomic scope" value="Bacteria"/>
</dbReference>
<dbReference type="HOGENOM" id="CLU_057693_2_0_6"/>
<dbReference type="Proteomes" id="UP000008319">
    <property type="component" value="Chromosome"/>
</dbReference>
<dbReference type="GO" id="GO:0005886">
    <property type="term" value="C:plasma membrane"/>
    <property type="evidence" value="ECO:0007669"/>
    <property type="project" value="UniProtKB-SubCell"/>
</dbReference>
<dbReference type="HAMAP" id="MF_01085">
    <property type="entry name" value="UPF0283"/>
    <property type="match status" value="1"/>
</dbReference>
<dbReference type="InterPro" id="IPR021147">
    <property type="entry name" value="DUF697"/>
</dbReference>
<dbReference type="InterPro" id="IPR006507">
    <property type="entry name" value="UPF0283"/>
</dbReference>
<dbReference type="NCBIfam" id="TIGR01620">
    <property type="entry name" value="hyp_HI0043"/>
    <property type="match status" value="1"/>
</dbReference>
<dbReference type="PANTHER" id="PTHR39342">
    <property type="entry name" value="UPF0283 MEMBRANE PROTEIN YCJF"/>
    <property type="match status" value="1"/>
</dbReference>
<dbReference type="PANTHER" id="PTHR39342:SF1">
    <property type="entry name" value="UPF0283 MEMBRANE PROTEIN YCJF"/>
    <property type="match status" value="1"/>
</dbReference>
<dbReference type="Pfam" id="PF05128">
    <property type="entry name" value="DUF697"/>
    <property type="match status" value="1"/>
</dbReference>
<comment type="subcellular location">
    <subcellularLocation>
        <location evidence="1">Cell inner membrane</location>
        <topology evidence="1">Multi-pass membrane protein</topology>
    </subcellularLocation>
</comment>
<comment type="similarity">
    <text evidence="1">Belongs to the UPF0283 family.</text>
</comment>